<name>MTB5_NEIGO</name>
<dbReference type="EC" id="2.1.1.37"/>
<dbReference type="EMBL" id="U43735">
    <property type="protein sequence ID" value="AAA86268.1"/>
    <property type="molecule type" value="Genomic_DNA"/>
</dbReference>
<dbReference type="SMR" id="Q59605"/>
<dbReference type="REBASE" id="3608">
    <property type="entry name" value="M.NgoBV"/>
</dbReference>
<dbReference type="GO" id="GO:0003886">
    <property type="term" value="F:DNA (cytosine-5-)-methyltransferase activity"/>
    <property type="evidence" value="ECO:0007669"/>
    <property type="project" value="UniProtKB-EC"/>
</dbReference>
<dbReference type="GO" id="GO:0003677">
    <property type="term" value="F:DNA binding"/>
    <property type="evidence" value="ECO:0007669"/>
    <property type="project" value="UniProtKB-KW"/>
</dbReference>
<dbReference type="GO" id="GO:0009307">
    <property type="term" value="P:DNA restriction-modification system"/>
    <property type="evidence" value="ECO:0007669"/>
    <property type="project" value="UniProtKB-KW"/>
</dbReference>
<dbReference type="GO" id="GO:0032259">
    <property type="term" value="P:methylation"/>
    <property type="evidence" value="ECO:0007669"/>
    <property type="project" value="UniProtKB-KW"/>
</dbReference>
<dbReference type="CDD" id="cd00315">
    <property type="entry name" value="Cyt_C5_DNA_methylase"/>
    <property type="match status" value="1"/>
</dbReference>
<dbReference type="Gene3D" id="3.90.120.10">
    <property type="entry name" value="DNA Methylase, subunit A, domain 2"/>
    <property type="match status" value="1"/>
</dbReference>
<dbReference type="Gene3D" id="3.40.50.150">
    <property type="entry name" value="Vaccinia Virus protein VP39"/>
    <property type="match status" value="1"/>
</dbReference>
<dbReference type="InterPro" id="IPR050750">
    <property type="entry name" value="C5-MTase"/>
</dbReference>
<dbReference type="InterPro" id="IPR018117">
    <property type="entry name" value="C5_DNA_meth_AS"/>
</dbReference>
<dbReference type="InterPro" id="IPR001525">
    <property type="entry name" value="C5_MeTfrase"/>
</dbReference>
<dbReference type="InterPro" id="IPR029063">
    <property type="entry name" value="SAM-dependent_MTases_sf"/>
</dbReference>
<dbReference type="NCBIfam" id="TIGR00675">
    <property type="entry name" value="dcm"/>
    <property type="match status" value="1"/>
</dbReference>
<dbReference type="PANTHER" id="PTHR46098">
    <property type="entry name" value="TRNA (CYTOSINE(38)-C(5))-METHYLTRANSFERASE"/>
    <property type="match status" value="1"/>
</dbReference>
<dbReference type="PANTHER" id="PTHR46098:SF1">
    <property type="entry name" value="TRNA (CYTOSINE(38)-C(5))-METHYLTRANSFERASE"/>
    <property type="match status" value="1"/>
</dbReference>
<dbReference type="Pfam" id="PF00145">
    <property type="entry name" value="DNA_methylase"/>
    <property type="match status" value="1"/>
</dbReference>
<dbReference type="PRINTS" id="PR00105">
    <property type="entry name" value="C5METTRFRASE"/>
</dbReference>
<dbReference type="SUPFAM" id="SSF53335">
    <property type="entry name" value="S-adenosyl-L-methionine-dependent methyltransferases"/>
    <property type="match status" value="1"/>
</dbReference>
<dbReference type="PROSITE" id="PS00094">
    <property type="entry name" value="C5_MTASE_1"/>
    <property type="match status" value="1"/>
</dbReference>
<dbReference type="PROSITE" id="PS51679">
    <property type="entry name" value="SAM_MT_C5"/>
    <property type="match status" value="1"/>
</dbReference>
<reference key="1">
    <citation type="journal article" date="1995" name="Gene">
        <title>Restriction and modification systems of Neisseria gonorrhoeae.</title>
        <authorList>
            <person name="Stein D.C."/>
            <person name="Gunn J.S."/>
            <person name="Radlinska M."/>
            <person name="Piekarowicz A."/>
        </authorList>
    </citation>
    <scope>NUCLEOTIDE SEQUENCE [GENOMIC DNA]</scope>
    <scope>FUNCTION</scope>
    <source>
        <strain>WR302</strain>
    </source>
</reference>
<reference key="2">
    <citation type="journal article" date="2003" name="Nucleic Acids Res.">
        <title>A nomenclature for restriction enzymes, DNA methyltransferases, homing endonucleases and their genes.</title>
        <authorList>
            <person name="Roberts R.J."/>
            <person name="Belfort M."/>
            <person name="Bestor T."/>
            <person name="Bhagwat A.S."/>
            <person name="Bickle T.A."/>
            <person name="Bitinaite J."/>
            <person name="Blumenthal R.M."/>
            <person name="Degtyarev S.K."/>
            <person name="Dryden D.T."/>
            <person name="Dybvig K."/>
            <person name="Firman K."/>
            <person name="Gromova E.S."/>
            <person name="Gumport R.I."/>
            <person name="Halford S.E."/>
            <person name="Hattman S."/>
            <person name="Heitman J."/>
            <person name="Hornby D.P."/>
            <person name="Janulaitis A."/>
            <person name="Jeltsch A."/>
            <person name="Josephsen J."/>
            <person name="Kiss A."/>
            <person name="Klaenhammer T.R."/>
            <person name="Kobayashi I."/>
            <person name="Kong H."/>
            <person name="Krueger D.H."/>
            <person name="Lacks S."/>
            <person name="Marinus M.G."/>
            <person name="Miyahara M."/>
            <person name="Morgan R.D."/>
            <person name="Murray N.E."/>
            <person name="Nagaraja V."/>
            <person name="Piekarowicz A."/>
            <person name="Pingoud A."/>
            <person name="Raleigh E."/>
            <person name="Rao D.N."/>
            <person name="Reich N."/>
            <person name="Repin V.E."/>
            <person name="Selker E.U."/>
            <person name="Shaw P.C."/>
            <person name="Stein D.C."/>
            <person name="Stoddard B.L."/>
            <person name="Szybalski W."/>
            <person name="Trautner T.A."/>
            <person name="Van Etten J.L."/>
            <person name="Vitor J.M."/>
            <person name="Wilson G.G."/>
            <person name="Xu S.Y."/>
        </authorList>
    </citation>
    <scope>NOMENCLATURE</scope>
</reference>
<protein>
    <recommendedName>
        <fullName evidence="4">Type II methyltransferase M.NgoBV</fullName>
        <shortName evidence="4">M.NgoBV</shortName>
        <ecNumber>2.1.1.37</ecNumber>
    </recommendedName>
    <alternativeName>
        <fullName>Cytosine-specific methyltransferase NgoV</fullName>
        <shortName evidence="5">M.NgoV</shortName>
    </alternativeName>
    <alternativeName>
        <fullName>Modification methylase NgoBV</fullName>
    </alternativeName>
</protein>
<organism>
    <name type="scientific">Neisseria gonorrhoeae</name>
    <dbReference type="NCBI Taxonomy" id="485"/>
    <lineage>
        <taxon>Bacteria</taxon>
        <taxon>Pseudomonadati</taxon>
        <taxon>Pseudomonadota</taxon>
        <taxon>Betaproteobacteria</taxon>
        <taxon>Neisseriales</taxon>
        <taxon>Neisseriaceae</taxon>
        <taxon>Neisseria</taxon>
    </lineage>
</organism>
<sequence length="423" mass="47571">MQQIKFIDLFSGMSGIRKGFEQACRKQSVACECVFTSEIKPAALEVLKQNYPDEVPYGDITKIETGDIPDFDILLAGFPCQAFSFAGKRLGFEDTRGTLFFDVARILKAKKPKGFILENVEGLVTHDRKDSTQKIGRTLTVILETLEALGYYVSWKVLNAKEFGIPQNRKRIYLTGSLKSKPDLSFETSPSPKLKNILESGLPTESSPFIKKLLKKFPPSELYGKSVKDKRGGKNNIHSWDIELKGAVTEEEKQLLNILLKERRKKNGLQKIGIDWMDGMPLTKAQISTFYKHPDLQNILDSLTDKGYLVLEHPKQKIGGQRIKDESLPKGYNIVSGKKSFEINKILDPNDVAPTLFAMDMEHLFVVDNGGLRTLTGKEGLRLFGYPDDYPFDIPKKDRCDLLGNTVAVPVIKAVSERLLHTL</sequence>
<comment type="function">
    <text evidence="3 4">A methylase, recognizes the double-stranded sequence 5'-GGNNCC-3', methylates C-5 on both strands, and protects the DNA from cleavage by the NgoBV endonuclease.</text>
</comment>
<comment type="catalytic activity">
    <reaction evidence="2">
        <text>a 2'-deoxycytidine in DNA + S-adenosyl-L-methionine = a 5-methyl-2'-deoxycytidine in DNA + S-adenosyl-L-homocysteine + H(+)</text>
        <dbReference type="Rhea" id="RHEA:13681"/>
        <dbReference type="Rhea" id="RHEA-COMP:11369"/>
        <dbReference type="Rhea" id="RHEA-COMP:11370"/>
        <dbReference type="ChEBI" id="CHEBI:15378"/>
        <dbReference type="ChEBI" id="CHEBI:57856"/>
        <dbReference type="ChEBI" id="CHEBI:59789"/>
        <dbReference type="ChEBI" id="CHEBI:85452"/>
        <dbReference type="ChEBI" id="CHEBI:85454"/>
        <dbReference type="EC" id="2.1.1.37"/>
    </reaction>
</comment>
<comment type="similarity">
    <text evidence="1">Belongs to the class I-like SAM-binding methyltransferase superfamily. C5-methyltransferase family.</text>
</comment>
<evidence type="ECO:0000255" key="1">
    <source>
        <dbReference type="PROSITE-ProRule" id="PRU01016"/>
    </source>
</evidence>
<evidence type="ECO:0000255" key="2">
    <source>
        <dbReference type="PROSITE-ProRule" id="PRU10018"/>
    </source>
</evidence>
<evidence type="ECO:0000269" key="3">
    <source>
    </source>
</evidence>
<evidence type="ECO:0000303" key="4">
    <source>
    </source>
</evidence>
<evidence type="ECO:0000303" key="5">
    <source>
    </source>
</evidence>
<proteinExistence type="inferred from homology"/>
<accession>Q59605</accession>
<gene>
    <name type="primary">ngoBVM</name>
    <name evidence="5" type="synonym">dcmE</name>
</gene>
<feature type="chain" id="PRO_0000087897" description="Type II methyltransferase M.NgoBV">
    <location>
        <begin position="1"/>
        <end position="423"/>
    </location>
</feature>
<feature type="domain" description="SAM-dependent MTase C5-type" evidence="1">
    <location>
        <begin position="4"/>
        <end position="423"/>
    </location>
</feature>
<feature type="active site" evidence="1 2">
    <location>
        <position position="80"/>
    </location>
</feature>
<keyword id="KW-0238">DNA-binding</keyword>
<keyword id="KW-0489">Methyltransferase</keyword>
<keyword id="KW-0680">Restriction system</keyword>
<keyword id="KW-0949">S-adenosyl-L-methionine</keyword>
<keyword id="KW-0808">Transferase</keyword>